<protein>
    <recommendedName>
        <fullName>m7GpppN-mRNA hydrolase NUDT17</fullName>
        <ecNumber evidence="2">3.6.1.62</ecNumber>
    </recommendedName>
    <alternativeName>
        <fullName>Nucleoside diphosphate-linked moiety X motif 17</fullName>
        <shortName>Nudix motif 17</shortName>
    </alternativeName>
</protein>
<evidence type="ECO:0000250" key="1"/>
<evidence type="ECO:0000250" key="2">
    <source>
        <dbReference type="UniProtKB" id="Q9CWD3"/>
    </source>
</evidence>
<evidence type="ECO:0000255" key="3">
    <source>
        <dbReference type="PROSITE-ProRule" id="PRU00794"/>
    </source>
</evidence>
<evidence type="ECO:0000256" key="4">
    <source>
        <dbReference type="SAM" id="MobiDB-lite"/>
    </source>
</evidence>
<evidence type="ECO:0000305" key="5"/>
<evidence type="ECO:0007829" key="6">
    <source>
        <dbReference type="PDB" id="5LF8"/>
    </source>
</evidence>
<keyword id="KW-0002">3D-structure</keyword>
<keyword id="KW-0378">Hydrolase</keyword>
<keyword id="KW-0460">Magnesium</keyword>
<keyword id="KW-0464">Manganese</keyword>
<keyword id="KW-0479">Metal-binding</keyword>
<keyword id="KW-1185">Reference proteome</keyword>
<sequence length="328" mass="35923">MAEVRVQLLLSRRPESVSFARSVCGLLGAGPGLGTWPIHCSLKRGRLVLSSRPFPGASARLPLQRPPFCPFAALEERPRVPGAELPTDRGVDLGVAVILQSSDKTVLLTRRARTLSVSPNLWVPPGGHVELEEELLDGGLRELWEESGLHLPQGQFSWVPLGLWESAYPPRLSWGLPKYHHIVLYLLVISQESQQQLQARIQPNPNEVSALMWLTPDVAAAVAAAEDGTETPGLLPQDLPPSVLAVELEEDGRARPLVLHMSTLLRMIPTMAEDKERVSTGTKFALKLWLQHLGRTPPPCKSAAYLDPGPAKEEWNMDPLPPNQGSGK</sequence>
<name>NUD17_HUMAN</name>
<accession>P0C025</accession>
<reference key="1">
    <citation type="journal article" date="2006" name="Nature">
        <title>The DNA sequence and biological annotation of human chromosome 1.</title>
        <authorList>
            <person name="Gregory S.G."/>
            <person name="Barlow K.F."/>
            <person name="McLay K.E."/>
            <person name="Kaul R."/>
            <person name="Swarbreck D."/>
            <person name="Dunham A."/>
            <person name="Scott C.E."/>
            <person name="Howe K.L."/>
            <person name="Woodfine K."/>
            <person name="Spencer C.C.A."/>
            <person name="Jones M.C."/>
            <person name="Gillson C."/>
            <person name="Searle S."/>
            <person name="Zhou Y."/>
            <person name="Kokocinski F."/>
            <person name="McDonald L."/>
            <person name="Evans R."/>
            <person name="Phillips K."/>
            <person name="Atkinson A."/>
            <person name="Cooper R."/>
            <person name="Jones C."/>
            <person name="Hall R.E."/>
            <person name="Andrews T.D."/>
            <person name="Lloyd C."/>
            <person name="Ainscough R."/>
            <person name="Almeida J.P."/>
            <person name="Ambrose K.D."/>
            <person name="Anderson F."/>
            <person name="Andrew R.W."/>
            <person name="Ashwell R.I.S."/>
            <person name="Aubin K."/>
            <person name="Babbage A.K."/>
            <person name="Bagguley C.L."/>
            <person name="Bailey J."/>
            <person name="Beasley H."/>
            <person name="Bethel G."/>
            <person name="Bird C.P."/>
            <person name="Bray-Allen S."/>
            <person name="Brown J.Y."/>
            <person name="Brown A.J."/>
            <person name="Buckley D."/>
            <person name="Burton J."/>
            <person name="Bye J."/>
            <person name="Carder C."/>
            <person name="Chapman J.C."/>
            <person name="Clark S.Y."/>
            <person name="Clarke G."/>
            <person name="Clee C."/>
            <person name="Cobley V."/>
            <person name="Collier R.E."/>
            <person name="Corby N."/>
            <person name="Coville G.J."/>
            <person name="Davies J."/>
            <person name="Deadman R."/>
            <person name="Dunn M."/>
            <person name="Earthrowl M."/>
            <person name="Ellington A.G."/>
            <person name="Errington H."/>
            <person name="Frankish A."/>
            <person name="Frankland J."/>
            <person name="French L."/>
            <person name="Garner P."/>
            <person name="Garnett J."/>
            <person name="Gay L."/>
            <person name="Ghori M.R.J."/>
            <person name="Gibson R."/>
            <person name="Gilby L.M."/>
            <person name="Gillett W."/>
            <person name="Glithero R.J."/>
            <person name="Grafham D.V."/>
            <person name="Griffiths C."/>
            <person name="Griffiths-Jones S."/>
            <person name="Grocock R."/>
            <person name="Hammond S."/>
            <person name="Harrison E.S.I."/>
            <person name="Hart E."/>
            <person name="Haugen E."/>
            <person name="Heath P.D."/>
            <person name="Holmes S."/>
            <person name="Holt K."/>
            <person name="Howden P.J."/>
            <person name="Hunt A.R."/>
            <person name="Hunt S.E."/>
            <person name="Hunter G."/>
            <person name="Isherwood J."/>
            <person name="James R."/>
            <person name="Johnson C."/>
            <person name="Johnson D."/>
            <person name="Joy A."/>
            <person name="Kay M."/>
            <person name="Kershaw J.K."/>
            <person name="Kibukawa M."/>
            <person name="Kimberley A.M."/>
            <person name="King A."/>
            <person name="Knights A.J."/>
            <person name="Lad H."/>
            <person name="Laird G."/>
            <person name="Lawlor S."/>
            <person name="Leongamornlert D.A."/>
            <person name="Lloyd D.M."/>
            <person name="Loveland J."/>
            <person name="Lovell J."/>
            <person name="Lush M.J."/>
            <person name="Lyne R."/>
            <person name="Martin S."/>
            <person name="Mashreghi-Mohammadi M."/>
            <person name="Matthews L."/>
            <person name="Matthews N.S.W."/>
            <person name="McLaren S."/>
            <person name="Milne S."/>
            <person name="Mistry S."/>
            <person name="Moore M.J.F."/>
            <person name="Nickerson T."/>
            <person name="O'Dell C.N."/>
            <person name="Oliver K."/>
            <person name="Palmeiri A."/>
            <person name="Palmer S.A."/>
            <person name="Parker A."/>
            <person name="Patel D."/>
            <person name="Pearce A.V."/>
            <person name="Peck A.I."/>
            <person name="Pelan S."/>
            <person name="Phelps K."/>
            <person name="Phillimore B.J."/>
            <person name="Plumb R."/>
            <person name="Rajan J."/>
            <person name="Raymond C."/>
            <person name="Rouse G."/>
            <person name="Saenphimmachak C."/>
            <person name="Sehra H.K."/>
            <person name="Sheridan E."/>
            <person name="Shownkeen R."/>
            <person name="Sims S."/>
            <person name="Skuce C.D."/>
            <person name="Smith M."/>
            <person name="Steward C."/>
            <person name="Subramanian S."/>
            <person name="Sycamore N."/>
            <person name="Tracey A."/>
            <person name="Tromans A."/>
            <person name="Van Helmond Z."/>
            <person name="Wall M."/>
            <person name="Wallis J.M."/>
            <person name="White S."/>
            <person name="Whitehead S.L."/>
            <person name="Wilkinson J.E."/>
            <person name="Willey D.L."/>
            <person name="Williams H."/>
            <person name="Wilming L."/>
            <person name="Wray P.W."/>
            <person name="Wu Z."/>
            <person name="Coulson A."/>
            <person name="Vaudin M."/>
            <person name="Sulston J.E."/>
            <person name="Durbin R.M."/>
            <person name="Hubbard T."/>
            <person name="Wooster R."/>
            <person name="Dunham I."/>
            <person name="Carter N.P."/>
            <person name="McVean G."/>
            <person name="Ross M.T."/>
            <person name="Harrow J."/>
            <person name="Olson M.V."/>
            <person name="Beck S."/>
            <person name="Rogers J."/>
            <person name="Bentley D.R."/>
        </authorList>
    </citation>
    <scope>NUCLEOTIDE SEQUENCE [LARGE SCALE GENOMIC DNA]</scope>
</reference>
<feature type="chain" id="PRO_0000019953" description="m7GpppN-mRNA hydrolase NUDT17">
    <location>
        <begin position="1"/>
        <end position="328"/>
    </location>
</feature>
<feature type="domain" description="Nudix hydrolase" evidence="3">
    <location>
        <begin position="90"/>
        <end position="236"/>
    </location>
</feature>
<feature type="region of interest" description="Disordered" evidence="4">
    <location>
        <begin position="299"/>
        <end position="328"/>
    </location>
</feature>
<feature type="short sequence motif" description="Nudix box">
    <location>
        <begin position="127"/>
        <end position="148"/>
    </location>
</feature>
<feature type="binding site" evidence="1">
    <location>
        <position position="142"/>
    </location>
    <ligand>
        <name>Mg(2+)</name>
        <dbReference type="ChEBI" id="CHEBI:18420"/>
    </ligand>
</feature>
<feature type="binding site" evidence="1">
    <location>
        <position position="146"/>
    </location>
    <ligand>
        <name>Mg(2+)</name>
        <dbReference type="ChEBI" id="CHEBI:18420"/>
    </ligand>
</feature>
<feature type="strand" evidence="6">
    <location>
        <begin position="6"/>
        <end position="8"/>
    </location>
</feature>
<feature type="strand" evidence="6">
    <location>
        <begin position="10"/>
        <end position="13"/>
    </location>
</feature>
<feature type="strand" evidence="6">
    <location>
        <begin position="19"/>
        <end position="21"/>
    </location>
</feature>
<feature type="helix" evidence="6">
    <location>
        <begin position="23"/>
        <end position="27"/>
    </location>
</feature>
<feature type="strand" evidence="6">
    <location>
        <begin position="34"/>
        <end position="42"/>
    </location>
</feature>
<feature type="strand" evidence="6">
    <location>
        <begin position="47"/>
        <end position="52"/>
    </location>
</feature>
<feature type="strand" evidence="6">
    <location>
        <begin position="59"/>
        <end position="64"/>
    </location>
</feature>
<feature type="helix" evidence="6">
    <location>
        <begin position="70"/>
        <end position="74"/>
    </location>
</feature>
<feature type="strand" evidence="6">
    <location>
        <begin position="92"/>
        <end position="100"/>
    </location>
</feature>
<feature type="strand" evidence="6">
    <location>
        <begin position="106"/>
        <end position="111"/>
    </location>
</feature>
<feature type="strand" evidence="6">
    <location>
        <begin position="116"/>
        <end position="118"/>
    </location>
</feature>
<feature type="strand" evidence="6">
    <location>
        <begin position="121"/>
        <end position="123"/>
    </location>
</feature>
<feature type="strand" evidence="6">
    <location>
        <begin position="125"/>
        <end position="128"/>
    </location>
</feature>
<feature type="helix" evidence="6">
    <location>
        <begin position="135"/>
        <end position="147"/>
    </location>
</feature>
<feature type="strand" evidence="6">
    <location>
        <begin position="155"/>
        <end position="171"/>
    </location>
</feature>
<feature type="helix" evidence="6">
    <location>
        <begin position="172"/>
        <end position="174"/>
    </location>
</feature>
<feature type="strand" evidence="6">
    <location>
        <begin position="178"/>
        <end position="192"/>
    </location>
</feature>
<feature type="helix" evidence="6">
    <location>
        <begin position="194"/>
        <end position="199"/>
    </location>
</feature>
<feature type="turn" evidence="6">
    <location>
        <begin position="205"/>
        <end position="207"/>
    </location>
</feature>
<feature type="strand" evidence="6">
    <location>
        <begin position="208"/>
        <end position="214"/>
    </location>
</feature>
<feature type="helix" evidence="6">
    <location>
        <begin position="216"/>
        <end position="223"/>
    </location>
</feature>
<feature type="helix" evidence="6">
    <location>
        <begin position="261"/>
        <end position="264"/>
    </location>
</feature>
<feature type="strand" evidence="6">
    <location>
        <begin position="276"/>
        <end position="278"/>
    </location>
</feature>
<feature type="helix" evidence="6">
    <location>
        <begin position="280"/>
        <end position="292"/>
    </location>
</feature>
<dbReference type="EC" id="3.6.1.62" evidence="2"/>
<dbReference type="EMBL" id="AL160282">
    <property type="status" value="NOT_ANNOTATED_CDS"/>
    <property type="molecule type" value="Genomic_DNA"/>
</dbReference>
<dbReference type="CCDS" id="CCDS72865.1"/>
<dbReference type="RefSeq" id="NP_001012776.1">
    <property type="nucleotide sequence ID" value="NM_001012758.3"/>
</dbReference>
<dbReference type="PDB" id="5LF8">
    <property type="method" value="X-ray"/>
    <property type="resolution" value="2.56 A"/>
    <property type="chains" value="A=1-328"/>
</dbReference>
<dbReference type="PDBsum" id="5LF8"/>
<dbReference type="SMR" id="P0C025"/>
<dbReference type="FunCoup" id="P0C025">
    <property type="interactions" value="88"/>
</dbReference>
<dbReference type="STRING" id="9606.ENSP00000334437"/>
<dbReference type="iPTMnet" id="P0C025"/>
<dbReference type="PhosphoSitePlus" id="P0C025"/>
<dbReference type="BioMuta" id="NUDT17"/>
<dbReference type="DMDM" id="254763318"/>
<dbReference type="jPOST" id="P0C025"/>
<dbReference type="PaxDb" id="9606-ENSP00000334437"/>
<dbReference type="ProteomicsDB" id="52289"/>
<dbReference type="Antibodypedia" id="33964">
    <property type="antibodies" value="34 antibodies from 14 providers"/>
</dbReference>
<dbReference type="DNASU" id="200035"/>
<dbReference type="Ensembl" id="ENST00000334513.6">
    <property type="protein sequence ID" value="ENSP00000334437.5"/>
    <property type="gene ID" value="ENSG00000186364.12"/>
</dbReference>
<dbReference type="GeneID" id="200035"/>
<dbReference type="KEGG" id="hsa:200035"/>
<dbReference type="MANE-Select" id="ENST00000334513.6">
    <property type="protein sequence ID" value="ENSP00000334437.5"/>
    <property type="RefSeq nucleotide sequence ID" value="NM_001012758.3"/>
    <property type="RefSeq protein sequence ID" value="NP_001012776.1"/>
</dbReference>
<dbReference type="UCSC" id="uc001eoe.4">
    <property type="organism name" value="human"/>
</dbReference>
<dbReference type="AGR" id="HGNC:26618"/>
<dbReference type="CTD" id="200035"/>
<dbReference type="GeneCards" id="NUDT17"/>
<dbReference type="HGNC" id="HGNC:26618">
    <property type="gene designation" value="NUDT17"/>
</dbReference>
<dbReference type="HPA" id="ENSG00000186364">
    <property type="expression patterns" value="Low tissue specificity"/>
</dbReference>
<dbReference type="neXtProt" id="NX_P0C025"/>
<dbReference type="OpenTargets" id="ENSG00000186364"/>
<dbReference type="PharmGKB" id="PA134890899"/>
<dbReference type="VEuPathDB" id="HostDB:ENSG00000186364"/>
<dbReference type="eggNOG" id="ENOG502QWT5">
    <property type="taxonomic scope" value="Eukaryota"/>
</dbReference>
<dbReference type="GeneTree" id="ENSGT00390000013847"/>
<dbReference type="HOGENOM" id="CLU_061877_1_0_1"/>
<dbReference type="InParanoid" id="P0C025"/>
<dbReference type="OMA" id="AKEEWNM"/>
<dbReference type="OrthoDB" id="447842at2759"/>
<dbReference type="PAN-GO" id="P0C025">
    <property type="GO annotations" value="5 GO annotations based on evolutionary models"/>
</dbReference>
<dbReference type="PhylomeDB" id="P0C025"/>
<dbReference type="TreeFam" id="TF313611"/>
<dbReference type="PathwayCommons" id="P0C025"/>
<dbReference type="SignaLink" id="P0C025"/>
<dbReference type="BioGRID-ORCS" id="200035">
    <property type="hits" value="62 hits in 1164 CRISPR screens"/>
</dbReference>
<dbReference type="ChiTaRS" id="NUDT17">
    <property type="organism name" value="human"/>
</dbReference>
<dbReference type="GenomeRNAi" id="200035"/>
<dbReference type="Pharos" id="P0C025">
    <property type="development level" value="Tdark"/>
</dbReference>
<dbReference type="PRO" id="PR:P0C025"/>
<dbReference type="Proteomes" id="UP000005640">
    <property type="component" value="Chromosome 1"/>
</dbReference>
<dbReference type="RNAct" id="P0C025">
    <property type="molecule type" value="protein"/>
</dbReference>
<dbReference type="Bgee" id="ENSG00000186364">
    <property type="expression patterns" value="Expressed in oviduct epithelium and 116 other cell types or tissues"/>
</dbReference>
<dbReference type="GO" id="GO:0005777">
    <property type="term" value="C:peroxisome"/>
    <property type="evidence" value="ECO:0000318"/>
    <property type="project" value="GO_Central"/>
</dbReference>
<dbReference type="GO" id="GO:0046872">
    <property type="term" value="F:metal ion binding"/>
    <property type="evidence" value="ECO:0007669"/>
    <property type="project" value="UniProtKB-KW"/>
</dbReference>
<dbReference type="GO" id="GO:0035529">
    <property type="term" value="F:NADH pyrophosphatase activity"/>
    <property type="evidence" value="ECO:0000318"/>
    <property type="project" value="GO_Central"/>
</dbReference>
<dbReference type="GO" id="GO:0019677">
    <property type="term" value="P:NAD catabolic process"/>
    <property type="evidence" value="ECO:0000318"/>
    <property type="project" value="GO_Central"/>
</dbReference>
<dbReference type="GO" id="GO:0006734">
    <property type="term" value="P:NADH metabolic process"/>
    <property type="evidence" value="ECO:0000318"/>
    <property type="project" value="GO_Central"/>
</dbReference>
<dbReference type="GO" id="GO:0006742">
    <property type="term" value="P:NADP catabolic process"/>
    <property type="evidence" value="ECO:0000318"/>
    <property type="project" value="GO_Central"/>
</dbReference>
<dbReference type="CDD" id="cd04694">
    <property type="entry name" value="NUDIX_Nudt17"/>
    <property type="match status" value="1"/>
</dbReference>
<dbReference type="FunFam" id="3.90.79.10:FF:000033">
    <property type="entry name" value="nucleoside diphosphate-linked moiety X motif 17 isoform X1"/>
    <property type="match status" value="1"/>
</dbReference>
<dbReference type="Gene3D" id="3.90.79.10">
    <property type="entry name" value="Nucleoside Triphosphate Pyrophosphohydrolase"/>
    <property type="match status" value="1"/>
</dbReference>
<dbReference type="InterPro" id="IPR050241">
    <property type="entry name" value="NAD-cap_RNA_hydrolase_NudC"/>
</dbReference>
<dbReference type="InterPro" id="IPR015797">
    <property type="entry name" value="NUDIX_hydrolase-like_dom_sf"/>
</dbReference>
<dbReference type="InterPro" id="IPR000086">
    <property type="entry name" value="NUDIX_hydrolase_dom"/>
</dbReference>
<dbReference type="InterPro" id="IPR033716">
    <property type="entry name" value="Nudt17_dom"/>
</dbReference>
<dbReference type="PANTHER" id="PTHR42904:SF1">
    <property type="entry name" value="NUCLEOSIDE DIPHOSPHATE-LINKED MOIETY X MOTIF 17"/>
    <property type="match status" value="1"/>
</dbReference>
<dbReference type="PANTHER" id="PTHR42904">
    <property type="entry name" value="NUDIX HYDROLASE, NUDC SUBFAMILY"/>
    <property type="match status" value="1"/>
</dbReference>
<dbReference type="Pfam" id="PF00293">
    <property type="entry name" value="NUDIX"/>
    <property type="match status" value="1"/>
</dbReference>
<dbReference type="SUPFAM" id="SSF55811">
    <property type="entry name" value="Nudix"/>
    <property type="match status" value="1"/>
</dbReference>
<dbReference type="PROSITE" id="PS51462">
    <property type="entry name" value="NUDIX"/>
    <property type="match status" value="1"/>
</dbReference>
<organism>
    <name type="scientific">Homo sapiens</name>
    <name type="common">Human</name>
    <dbReference type="NCBI Taxonomy" id="9606"/>
    <lineage>
        <taxon>Eukaryota</taxon>
        <taxon>Metazoa</taxon>
        <taxon>Chordata</taxon>
        <taxon>Craniata</taxon>
        <taxon>Vertebrata</taxon>
        <taxon>Euteleostomi</taxon>
        <taxon>Mammalia</taxon>
        <taxon>Eutheria</taxon>
        <taxon>Euarchontoglires</taxon>
        <taxon>Primates</taxon>
        <taxon>Haplorrhini</taxon>
        <taxon>Catarrhini</taxon>
        <taxon>Hominidae</taxon>
        <taxon>Homo</taxon>
    </lineage>
</organism>
<gene>
    <name type="primary">NUDT17</name>
</gene>
<proteinExistence type="evidence at protein level"/>
<comment type="function">
    <text evidence="2">Acts as a decapping enzyme capable of hydrolyzing monomethylated capped RNAs (in vitro). Hydrolyzes monomethylated capped RNA after alpha and beta phosphates to form N(7)-methyl-GDP. Shows low activity towards unmethylated capped RNA.</text>
</comment>
<comment type="catalytic activity">
    <reaction evidence="2">
        <text>a 5'-end (N(7)-methyl 5'-triphosphoguanosine)-ribonucleoside in mRNA + H2O = N(7)-methyl-GDP + a 5'-end phospho-ribonucleoside in mRNA + 2 H(+)</text>
        <dbReference type="Rhea" id="RHEA:67484"/>
        <dbReference type="Rhea" id="RHEA-COMP:15692"/>
        <dbReference type="Rhea" id="RHEA-COMP:17167"/>
        <dbReference type="ChEBI" id="CHEBI:15377"/>
        <dbReference type="ChEBI" id="CHEBI:15378"/>
        <dbReference type="ChEBI" id="CHEBI:63714"/>
        <dbReference type="ChEBI" id="CHEBI:138282"/>
        <dbReference type="ChEBI" id="CHEBI:156461"/>
        <dbReference type="EC" id="3.6.1.62"/>
    </reaction>
</comment>
<comment type="cofactor">
    <cofactor evidence="1">
        <name>Mg(2+)</name>
        <dbReference type="ChEBI" id="CHEBI:18420"/>
    </cofactor>
    <cofactor evidence="1">
        <name>Mn(2+)</name>
        <dbReference type="ChEBI" id="CHEBI:29035"/>
    </cofactor>
</comment>
<comment type="similarity">
    <text evidence="5">Belongs to the Nudix hydrolase family.</text>
</comment>